<protein>
    <recommendedName>
        <fullName>Insulin-like growth factor-binding protein 1</fullName>
        <shortName>IBP-1</shortName>
        <shortName>IGF-binding protein 1</shortName>
        <shortName>IGFBP-1</shortName>
    </recommendedName>
</protein>
<reference key="1">
    <citation type="submission" date="2004-02" db="EMBL/GenBank/DDBJ databases">
        <title>Cloning and characterization of insulin-like growth factor binding protein 1 (IGFBP-1) from thirteen-lined ground squirrel.</title>
        <authorList>
            <person name="Li Y."/>
            <person name="Klimanis D."/>
            <person name="Hallenbeck J.M."/>
        </authorList>
    </citation>
    <scope>NUCLEOTIDE SEQUENCE [MRNA]</scope>
</reference>
<gene>
    <name type="primary">IGFBP1</name>
</gene>
<organism>
    <name type="scientific">Ictidomys tridecemlineatus</name>
    <name type="common">Thirteen-lined ground squirrel</name>
    <name type="synonym">Spermophilus tridecemlineatus</name>
    <dbReference type="NCBI Taxonomy" id="43179"/>
    <lineage>
        <taxon>Eukaryota</taxon>
        <taxon>Metazoa</taxon>
        <taxon>Chordata</taxon>
        <taxon>Craniata</taxon>
        <taxon>Vertebrata</taxon>
        <taxon>Euteleostomi</taxon>
        <taxon>Mammalia</taxon>
        <taxon>Eutheria</taxon>
        <taxon>Euarchontoglires</taxon>
        <taxon>Glires</taxon>
        <taxon>Rodentia</taxon>
        <taxon>Sciuromorpha</taxon>
        <taxon>Sciuridae</taxon>
        <taxon>Xerinae</taxon>
        <taxon>Marmotini</taxon>
        <taxon>Ictidomys</taxon>
    </lineage>
</organism>
<name>IBP1_ICTTR</name>
<proteinExistence type="evidence at transcript level"/>
<comment type="function">
    <text evidence="2 3">Multifunctional protein that plays a critical role in regulating the availability of IGFs such as IGF1 and IGF2 to their receptors and thereby regulates IGF-mediated cellular processes including cell migration, proliferation, differentiation or apoptosis in a cell-type specific manner. Also plays a positive role in cell migration by interacting with integrin ITGA5:ITGB1 through its RGD motif. Mechanistically, binding to integrins leads to activation of focal adhesion kinase/PTK2 and stimulation of the mitogen-activated protein kinase (MAPK) pathway (By similarity). Regulates cardiomyocyte apoptosis by suppressing HIF-1alpha/HIF1A degradation through ubiquitination (By similarity).</text>
</comment>
<comment type="subunit">
    <text evidence="2 3">Binds equally well IGF1 and IGF2. Interacts with integrin ITGA5:ITGB1. Interacts with VHL; this interaction inhibits HIF1A degradation (By similarity).</text>
</comment>
<comment type="subcellular location">
    <subcellularLocation>
        <location evidence="2">Secreted</location>
    </subcellularLocation>
</comment>
<sequence length="272" mass="29814">MPEVPAAGLWPFLLLLAVQVSTVASSTQPWHCAPCSAEKLALCPPVPSSCPELSRPAGCGCCPMCALPLGAACGVATARYARGLSCRALPGEPRPLHALTRGQGACVPEPATPTASGLSSIEKEEAKASMVPERVPPESAEMTEEQLLESFHLMASSSEDQPILWNAISTYKSMRAREMADIKKWKQPCRRELYKVLERLAKAQQKAGEEIYKFYLPNCNKNGFYHSKQCETSLDGEAELCWCVYPWSGRRIPGSLEIRGDPNCHQYFNVQN</sequence>
<evidence type="ECO:0000250" key="1"/>
<evidence type="ECO:0000250" key="2">
    <source>
        <dbReference type="UniProtKB" id="P08833"/>
    </source>
</evidence>
<evidence type="ECO:0000250" key="3">
    <source>
        <dbReference type="UniProtKB" id="P21743"/>
    </source>
</evidence>
<evidence type="ECO:0000255" key="4">
    <source>
        <dbReference type="PROSITE-ProRule" id="PRU00500"/>
    </source>
</evidence>
<evidence type="ECO:0000255" key="5">
    <source>
        <dbReference type="PROSITE-ProRule" id="PRU00653"/>
    </source>
</evidence>
<feature type="signal peptide" evidence="1">
    <location>
        <begin position="1"/>
        <end position="25"/>
    </location>
</feature>
<feature type="chain" id="PRO_0000250501" description="Insulin-like growth factor-binding protein 1">
    <location>
        <begin position="26"/>
        <end position="272"/>
    </location>
</feature>
<feature type="domain" description="IGFBP N-terminal" evidence="5">
    <location>
        <begin position="28"/>
        <end position="109"/>
    </location>
</feature>
<feature type="domain" description="Thyroglobulin type-1" evidence="4">
    <location>
        <begin position="186"/>
        <end position="264"/>
    </location>
</feature>
<feature type="short sequence motif" description="Cell attachment site">
    <location>
        <begin position="259"/>
        <end position="261"/>
    </location>
</feature>
<feature type="modified residue" description="Phosphoserine" evidence="2">
    <location>
        <position position="139"/>
    </location>
</feature>
<feature type="modified residue" description="Phosphoserine" evidence="2">
    <location>
        <position position="157"/>
    </location>
</feature>
<feature type="modified residue" description="Phosphoserine" evidence="2">
    <location>
        <position position="169"/>
    </location>
</feature>
<feature type="modified residue" description="Phosphothreonine" evidence="2">
    <location>
        <position position="170"/>
    </location>
</feature>
<feature type="modified residue" description="Phosphotyrosine" evidence="2">
    <location>
        <position position="171"/>
    </location>
</feature>
<feature type="modified residue" description="Phosphoserine" evidence="2">
    <location>
        <position position="255"/>
    </location>
</feature>
<feature type="disulfide bond" evidence="5">
    <location>
        <begin position="32"/>
        <end position="59"/>
    </location>
</feature>
<feature type="disulfide bond" evidence="5">
    <location>
        <begin position="35"/>
        <end position="61"/>
    </location>
</feature>
<feature type="disulfide bond" evidence="5">
    <location>
        <begin position="43"/>
        <end position="62"/>
    </location>
</feature>
<feature type="disulfide bond" evidence="5">
    <location>
        <begin position="50"/>
        <end position="65"/>
    </location>
</feature>
<feature type="disulfide bond" evidence="5">
    <location>
        <begin position="73"/>
        <end position="86"/>
    </location>
</feature>
<feature type="disulfide bond" evidence="4">
    <location>
        <begin position="189"/>
        <end position="219"/>
    </location>
</feature>
<feature type="disulfide bond" evidence="4">
    <location>
        <begin position="230"/>
        <end position="241"/>
    </location>
</feature>
<feature type="disulfide bond" evidence="4">
    <location>
        <begin position="243"/>
        <end position="264"/>
    </location>
</feature>
<keyword id="KW-1015">Disulfide bond</keyword>
<keyword id="KW-0340">Growth factor binding</keyword>
<keyword id="KW-0597">Phosphoprotein</keyword>
<keyword id="KW-1185">Reference proteome</keyword>
<keyword id="KW-0964">Secreted</keyword>
<keyword id="KW-0732">Signal</keyword>
<accession>Q6Q484</accession>
<dbReference type="EMBL" id="AY560836">
    <property type="protein sequence ID" value="AAS67029.1"/>
    <property type="molecule type" value="mRNA"/>
</dbReference>
<dbReference type="SMR" id="Q6Q484"/>
<dbReference type="FunCoup" id="Q6Q484">
    <property type="interactions" value="151"/>
</dbReference>
<dbReference type="STRING" id="43179.ENSSTOP00000007832"/>
<dbReference type="eggNOG" id="ENOG502QWRP">
    <property type="taxonomic scope" value="Eukaryota"/>
</dbReference>
<dbReference type="InParanoid" id="Q6Q484"/>
<dbReference type="Proteomes" id="UP000005215">
    <property type="component" value="Unassembled WGS sequence"/>
</dbReference>
<dbReference type="GO" id="GO:0005615">
    <property type="term" value="C:extracellular space"/>
    <property type="evidence" value="ECO:0007669"/>
    <property type="project" value="TreeGrafter"/>
</dbReference>
<dbReference type="GO" id="GO:0031994">
    <property type="term" value="F:insulin-like growth factor I binding"/>
    <property type="evidence" value="ECO:0007669"/>
    <property type="project" value="TreeGrafter"/>
</dbReference>
<dbReference type="GO" id="GO:0031995">
    <property type="term" value="F:insulin-like growth factor II binding"/>
    <property type="evidence" value="ECO:0007669"/>
    <property type="project" value="TreeGrafter"/>
</dbReference>
<dbReference type="GO" id="GO:0043567">
    <property type="term" value="P:regulation of insulin-like growth factor receptor signaling pathway"/>
    <property type="evidence" value="ECO:0007669"/>
    <property type="project" value="TreeGrafter"/>
</dbReference>
<dbReference type="CDD" id="cd00191">
    <property type="entry name" value="TY"/>
    <property type="match status" value="1"/>
</dbReference>
<dbReference type="FunFam" id="4.10.40.20:FF:000001">
    <property type="entry name" value="Insulin-like growth factor binding protein 5"/>
    <property type="match status" value="1"/>
</dbReference>
<dbReference type="FunFam" id="4.10.800.10:FF:000002">
    <property type="entry name" value="Insulin-like growth factor-binding protein 2"/>
    <property type="match status" value="1"/>
</dbReference>
<dbReference type="Gene3D" id="4.10.40.20">
    <property type="match status" value="1"/>
</dbReference>
<dbReference type="Gene3D" id="4.10.800.10">
    <property type="entry name" value="Thyroglobulin type-1"/>
    <property type="match status" value="1"/>
</dbReference>
<dbReference type="InterPro" id="IPR009030">
    <property type="entry name" value="Growth_fac_rcpt_cys_sf"/>
</dbReference>
<dbReference type="InterPro" id="IPR000867">
    <property type="entry name" value="IGFBP-like"/>
</dbReference>
<dbReference type="InterPro" id="IPR022322">
    <property type="entry name" value="IGFBP1"/>
</dbReference>
<dbReference type="InterPro" id="IPR022321">
    <property type="entry name" value="IGFBP_1-6_chordata"/>
</dbReference>
<dbReference type="InterPro" id="IPR017891">
    <property type="entry name" value="Insulin_GF-bd_Cys-rich_CS"/>
</dbReference>
<dbReference type="InterPro" id="IPR000716">
    <property type="entry name" value="Thyroglobulin_1"/>
</dbReference>
<dbReference type="InterPro" id="IPR036857">
    <property type="entry name" value="Thyroglobulin_1_sf"/>
</dbReference>
<dbReference type="PANTHER" id="PTHR11551">
    <property type="entry name" value="INSULIN-LIKE GROWTH FACTOR BINDING PROTEIN"/>
    <property type="match status" value="1"/>
</dbReference>
<dbReference type="PANTHER" id="PTHR11551:SF6">
    <property type="entry name" value="INSULIN-LIKE GROWTH FACTOR-BINDING PROTEIN 1"/>
    <property type="match status" value="1"/>
</dbReference>
<dbReference type="Pfam" id="PF00219">
    <property type="entry name" value="IGFBP"/>
    <property type="match status" value="1"/>
</dbReference>
<dbReference type="Pfam" id="PF00086">
    <property type="entry name" value="Thyroglobulin_1"/>
    <property type="match status" value="1"/>
</dbReference>
<dbReference type="PRINTS" id="PR01976">
    <property type="entry name" value="IGFBPFAMILY"/>
</dbReference>
<dbReference type="PRINTS" id="PR01977">
    <property type="entry name" value="IGFBPFAMILY1"/>
</dbReference>
<dbReference type="SMART" id="SM00121">
    <property type="entry name" value="IB"/>
    <property type="match status" value="1"/>
</dbReference>
<dbReference type="SMART" id="SM00211">
    <property type="entry name" value="TY"/>
    <property type="match status" value="1"/>
</dbReference>
<dbReference type="SUPFAM" id="SSF57184">
    <property type="entry name" value="Growth factor receptor domain"/>
    <property type="match status" value="1"/>
</dbReference>
<dbReference type="SUPFAM" id="SSF57610">
    <property type="entry name" value="Thyroglobulin type-1 domain"/>
    <property type="match status" value="1"/>
</dbReference>
<dbReference type="PROSITE" id="PS00222">
    <property type="entry name" value="IGFBP_N_1"/>
    <property type="match status" value="1"/>
</dbReference>
<dbReference type="PROSITE" id="PS51323">
    <property type="entry name" value="IGFBP_N_2"/>
    <property type="match status" value="1"/>
</dbReference>
<dbReference type="PROSITE" id="PS00484">
    <property type="entry name" value="THYROGLOBULIN_1_1"/>
    <property type="match status" value="1"/>
</dbReference>
<dbReference type="PROSITE" id="PS51162">
    <property type="entry name" value="THYROGLOBULIN_1_2"/>
    <property type="match status" value="1"/>
</dbReference>